<name>PUTP_STAES</name>
<accession>Q8CNP2</accession>
<gene>
    <name type="primary">putP</name>
    <name type="ordered locus">SE_1587</name>
</gene>
<proteinExistence type="inferred from homology"/>
<reference key="1">
    <citation type="journal article" date="2003" name="Mol. Microbiol.">
        <title>Genome-based analysis of virulence genes in a non-biofilm-forming Staphylococcus epidermidis strain (ATCC 12228).</title>
        <authorList>
            <person name="Zhang Y.-Q."/>
            <person name="Ren S.-X."/>
            <person name="Li H.-L."/>
            <person name="Wang Y.-X."/>
            <person name="Fu G."/>
            <person name="Yang J."/>
            <person name="Qin Z.-Q."/>
            <person name="Miao Y.-G."/>
            <person name="Wang W.-Y."/>
            <person name="Chen R.-S."/>
            <person name="Shen Y."/>
            <person name="Chen Z."/>
            <person name="Yuan Z.-H."/>
            <person name="Zhao G.-P."/>
            <person name="Qu D."/>
            <person name="Danchin A."/>
            <person name="Wen Y.-M."/>
        </authorList>
    </citation>
    <scope>NUCLEOTIDE SEQUENCE [LARGE SCALE GENOMIC DNA]</scope>
    <source>
        <strain>ATCC 12228 / FDA PCI 1200</strain>
    </source>
</reference>
<comment type="function">
    <text evidence="1">Catalyzes the sodium-dependent uptake of extracellular L-proline.</text>
</comment>
<comment type="catalytic activity">
    <reaction evidence="1">
        <text>L-proline(in) + Na(+)(in) = L-proline(out) + Na(+)(out)</text>
        <dbReference type="Rhea" id="RHEA:28967"/>
        <dbReference type="ChEBI" id="CHEBI:29101"/>
        <dbReference type="ChEBI" id="CHEBI:60039"/>
    </reaction>
</comment>
<comment type="subcellular location">
    <subcellularLocation>
        <location evidence="3">Cell membrane</location>
        <topology evidence="2">Multi-pass membrane protein</topology>
    </subcellularLocation>
</comment>
<comment type="similarity">
    <text evidence="3">Belongs to the sodium:solute symporter (SSF) (TC 2.A.21) family.</text>
</comment>
<dbReference type="EMBL" id="AE015929">
    <property type="protein sequence ID" value="AAO05186.1"/>
    <property type="molecule type" value="Genomic_DNA"/>
</dbReference>
<dbReference type="RefSeq" id="NP_765142.1">
    <property type="nucleotide sequence ID" value="NC_004461.1"/>
</dbReference>
<dbReference type="RefSeq" id="WP_002484895.1">
    <property type="nucleotide sequence ID" value="NZ_WBME01000010.1"/>
</dbReference>
<dbReference type="SMR" id="Q8CNP2"/>
<dbReference type="KEGG" id="sep:SE_1587"/>
<dbReference type="PATRIC" id="fig|176280.10.peg.1551"/>
<dbReference type="eggNOG" id="COG0591">
    <property type="taxonomic scope" value="Bacteria"/>
</dbReference>
<dbReference type="HOGENOM" id="CLU_018808_15_2_9"/>
<dbReference type="OrthoDB" id="9810181at2"/>
<dbReference type="Proteomes" id="UP000001411">
    <property type="component" value="Chromosome"/>
</dbReference>
<dbReference type="GO" id="GO:0005886">
    <property type="term" value="C:plasma membrane"/>
    <property type="evidence" value="ECO:0007669"/>
    <property type="project" value="UniProtKB-SubCell"/>
</dbReference>
<dbReference type="GO" id="GO:0015193">
    <property type="term" value="F:L-proline transmembrane transporter activity"/>
    <property type="evidence" value="ECO:0007669"/>
    <property type="project" value="TreeGrafter"/>
</dbReference>
<dbReference type="GO" id="GO:0005298">
    <property type="term" value="F:proline:sodium symporter activity"/>
    <property type="evidence" value="ECO:0007669"/>
    <property type="project" value="InterPro"/>
</dbReference>
<dbReference type="GO" id="GO:0031402">
    <property type="term" value="F:sodium ion binding"/>
    <property type="evidence" value="ECO:0007669"/>
    <property type="project" value="InterPro"/>
</dbReference>
<dbReference type="GO" id="GO:0015824">
    <property type="term" value="P:proline transport"/>
    <property type="evidence" value="ECO:0007669"/>
    <property type="project" value="InterPro"/>
</dbReference>
<dbReference type="CDD" id="cd11475">
    <property type="entry name" value="SLC5sbd_PutP"/>
    <property type="match status" value="1"/>
</dbReference>
<dbReference type="FunFam" id="1.20.1730.10:FF:000002">
    <property type="entry name" value="Sodium/proline symporter"/>
    <property type="match status" value="1"/>
</dbReference>
<dbReference type="Gene3D" id="1.20.1730.10">
    <property type="entry name" value="Sodium/glucose cotransporter"/>
    <property type="match status" value="1"/>
</dbReference>
<dbReference type="InterPro" id="IPR038377">
    <property type="entry name" value="Na/Glc_symporter_sf"/>
</dbReference>
<dbReference type="InterPro" id="IPR011851">
    <property type="entry name" value="Na/Pro_symporter"/>
</dbReference>
<dbReference type="InterPro" id="IPR001734">
    <property type="entry name" value="Na/solute_symporter"/>
</dbReference>
<dbReference type="InterPro" id="IPR050277">
    <property type="entry name" value="Sodium:Solute_Symporter"/>
</dbReference>
<dbReference type="NCBIfam" id="TIGR02121">
    <property type="entry name" value="Na_Pro_sym"/>
    <property type="match status" value="1"/>
</dbReference>
<dbReference type="NCBIfam" id="TIGR00813">
    <property type="entry name" value="sss"/>
    <property type="match status" value="1"/>
</dbReference>
<dbReference type="PANTHER" id="PTHR48086">
    <property type="entry name" value="SODIUM/PROLINE SYMPORTER-RELATED"/>
    <property type="match status" value="1"/>
</dbReference>
<dbReference type="PANTHER" id="PTHR48086:SF3">
    <property type="entry name" value="SODIUM_PROLINE SYMPORTER"/>
    <property type="match status" value="1"/>
</dbReference>
<dbReference type="Pfam" id="PF00474">
    <property type="entry name" value="SSF"/>
    <property type="match status" value="1"/>
</dbReference>
<dbReference type="PROSITE" id="PS50283">
    <property type="entry name" value="NA_SOLUT_SYMP_3"/>
    <property type="match status" value="1"/>
</dbReference>
<organism>
    <name type="scientific">Staphylococcus epidermidis (strain ATCC 12228 / FDA PCI 1200)</name>
    <dbReference type="NCBI Taxonomy" id="176280"/>
    <lineage>
        <taxon>Bacteria</taxon>
        <taxon>Bacillati</taxon>
        <taxon>Bacillota</taxon>
        <taxon>Bacilli</taxon>
        <taxon>Bacillales</taxon>
        <taxon>Staphylococcaceae</taxon>
        <taxon>Staphylococcus</taxon>
    </lineage>
</organism>
<protein>
    <recommendedName>
        <fullName>Sodium/proline symporter</fullName>
    </recommendedName>
    <alternativeName>
        <fullName>Proline permease</fullName>
    </alternativeName>
</protein>
<sequence length="511" mass="56025">MFTLGTALSNQIDANWQTYVMIIVYFIILLIIGFYGYRQATGNLSEFMLGGRSIGPYITALSAGASDMSGWMIMGLPGSVYSTGLSAIWITIGLTLGAYINYFVVAPRLRVFTEIAGDAITLPDFFKNRLDDKKNIIKIISGLIIVVFFTLYTHSGFVSGGKLFESAFGLNYHAGLLIVAIIVIFYTFFGGYLAVSITDFFQGVIMLIAMVMVPIVALLKLNGWDTFHDIAQMKPTNLDLFRGTTVLGIVSLFSWGLGYFGQPHIIVRFMSIKSHKLLPKARRLGISWMAVGLLGAIGVGLTGISFISERHIKSEDPETLFIVMSQILFHPLVGGFLLAAILAAIMSTISSQLLVTSSSLTEDFYKLIRGSDKASSHQKEFVLIGRLSVLLVAIVAITIAWHPNDTILNLVGNAWAGFGAAFSPLVLYSLYWKDLTRAGAISGMVAGAVVVIVWISWIKPLATINAFFGMYEIIPGFIISVLITYIVSKLTKKPDDYVIENLNKVKHIVKE</sequence>
<keyword id="KW-0029">Amino-acid transport</keyword>
<keyword id="KW-1003">Cell membrane</keyword>
<keyword id="KW-0406">Ion transport</keyword>
<keyword id="KW-0472">Membrane</keyword>
<keyword id="KW-0915">Sodium</keyword>
<keyword id="KW-0739">Sodium transport</keyword>
<keyword id="KW-0769">Symport</keyword>
<keyword id="KW-0812">Transmembrane</keyword>
<keyword id="KW-1133">Transmembrane helix</keyword>
<keyword id="KW-0813">Transport</keyword>
<evidence type="ECO:0000250" key="1">
    <source>
        <dbReference type="UniProtKB" id="P07117"/>
    </source>
</evidence>
<evidence type="ECO:0000255" key="2"/>
<evidence type="ECO:0000305" key="3"/>
<feature type="chain" id="PRO_0000364106" description="Sodium/proline symporter">
    <location>
        <begin position="1"/>
        <end position="511"/>
    </location>
</feature>
<feature type="transmembrane region" description="Helical" evidence="2">
    <location>
        <begin position="16"/>
        <end position="36"/>
    </location>
</feature>
<feature type="transmembrane region" description="Helical" evidence="2">
    <location>
        <begin position="54"/>
        <end position="74"/>
    </location>
</feature>
<feature type="transmembrane region" description="Helical" evidence="2">
    <location>
        <begin position="85"/>
        <end position="105"/>
    </location>
</feature>
<feature type="transmembrane region" description="Helical" evidence="2">
    <location>
        <begin position="139"/>
        <end position="159"/>
    </location>
</feature>
<feature type="transmembrane region" description="Helical" evidence="2">
    <location>
        <begin position="175"/>
        <end position="195"/>
    </location>
</feature>
<feature type="transmembrane region" description="Helical" evidence="2">
    <location>
        <begin position="199"/>
        <end position="219"/>
    </location>
</feature>
<feature type="transmembrane region" description="Helical" evidence="2">
    <location>
        <begin position="246"/>
        <end position="266"/>
    </location>
</feature>
<feature type="transmembrane region" description="Helical" evidence="2">
    <location>
        <begin position="284"/>
        <end position="304"/>
    </location>
</feature>
<feature type="transmembrane region" description="Helical" evidence="2">
    <location>
        <begin position="327"/>
        <end position="347"/>
    </location>
</feature>
<feature type="transmembrane region" description="Helical" evidence="2">
    <location>
        <begin position="381"/>
        <end position="401"/>
    </location>
</feature>
<feature type="transmembrane region" description="Helical" evidence="2">
    <location>
        <begin position="407"/>
        <end position="427"/>
    </location>
</feature>
<feature type="transmembrane region" description="Helical" evidence="2">
    <location>
        <begin position="438"/>
        <end position="458"/>
    </location>
</feature>
<feature type="transmembrane region" description="Helical" evidence="2">
    <location>
        <begin position="467"/>
        <end position="487"/>
    </location>
</feature>